<proteinExistence type="evidence at transcript level"/>
<keyword id="KW-0067">ATP-binding</keyword>
<keyword id="KW-0418">Kinase</keyword>
<keyword id="KW-0547">Nucleotide-binding</keyword>
<keyword id="KW-0597">Phosphoprotein</keyword>
<keyword id="KW-1185">Reference proteome</keyword>
<keyword id="KW-0723">Serine/threonine-protein kinase</keyword>
<keyword id="KW-0808">Transferase</keyword>
<reference key="1">
    <citation type="submission" date="2004-11" db="EMBL/GenBank/DDBJ databases">
        <authorList>
            <consortium name="The German cDNA consortium"/>
        </authorList>
    </citation>
    <scope>NUCLEOTIDE SEQUENCE [LARGE SCALE MRNA]</scope>
    <source>
        <tissue>Heart</tissue>
    </source>
</reference>
<feature type="chain" id="PRO_0000086492" description="Cyclin-dependent kinase 18">
    <location>
        <begin position="1"/>
        <end position="474"/>
    </location>
</feature>
<feature type="domain" description="Protein kinase" evidence="4">
    <location>
        <begin position="144"/>
        <end position="425"/>
    </location>
</feature>
<feature type="region of interest" description="Disordered" evidence="6">
    <location>
        <begin position="44"/>
        <end position="87"/>
    </location>
</feature>
<feature type="active site" description="Proton acceptor" evidence="4 5">
    <location>
        <position position="265"/>
    </location>
</feature>
<feature type="binding site" evidence="4">
    <location>
        <begin position="150"/>
        <end position="158"/>
    </location>
    <ligand>
        <name>ATP</name>
        <dbReference type="ChEBI" id="CHEBI:30616"/>
    </ligand>
</feature>
<feature type="binding site" evidence="4">
    <location>
        <position position="173"/>
    </location>
    <ligand>
        <name>ATP</name>
        <dbReference type="ChEBI" id="CHEBI:30616"/>
    </ligand>
</feature>
<feature type="modified residue" description="Phosphoserine" evidence="3">
    <location>
        <position position="14"/>
    </location>
</feature>
<feature type="modified residue" description="Phosphoserine" evidence="3">
    <location>
        <position position="74"/>
    </location>
</feature>
<feature type="modified residue" description="Phosphoserine" evidence="3">
    <location>
        <position position="89"/>
    </location>
</feature>
<feature type="modified residue" description="Phosphoserine" evidence="3">
    <location>
        <position position="98"/>
    </location>
</feature>
<feature type="modified residue" description="Phosphoserine" evidence="3">
    <location>
        <position position="117"/>
    </location>
</feature>
<feature type="modified residue" description="Phosphoserine" evidence="3">
    <location>
        <position position="132"/>
    </location>
</feature>
<feature type="modified residue" description="Phosphoserine" evidence="2">
    <location>
        <position position="440"/>
    </location>
</feature>
<feature type="modified residue" description="Phosphoserine" evidence="2">
    <location>
        <position position="443"/>
    </location>
</feature>
<organism>
    <name type="scientific">Pongo abelii</name>
    <name type="common">Sumatran orangutan</name>
    <name type="synonym">Pongo pygmaeus abelii</name>
    <dbReference type="NCBI Taxonomy" id="9601"/>
    <lineage>
        <taxon>Eukaryota</taxon>
        <taxon>Metazoa</taxon>
        <taxon>Chordata</taxon>
        <taxon>Craniata</taxon>
        <taxon>Vertebrata</taxon>
        <taxon>Euteleostomi</taxon>
        <taxon>Mammalia</taxon>
        <taxon>Eutheria</taxon>
        <taxon>Euarchontoglires</taxon>
        <taxon>Primates</taxon>
        <taxon>Haplorrhini</taxon>
        <taxon>Catarrhini</taxon>
        <taxon>Hominidae</taxon>
        <taxon>Pongo</taxon>
    </lineage>
</organism>
<accession>Q5RD01</accession>
<name>CDK18_PONAB</name>
<comment type="function">
    <text evidence="1">May play a role in signal transduction cascades in terminally differentiated cells.</text>
</comment>
<comment type="catalytic activity">
    <reaction>
        <text>L-seryl-[protein] + ATP = O-phospho-L-seryl-[protein] + ADP + H(+)</text>
        <dbReference type="Rhea" id="RHEA:17989"/>
        <dbReference type="Rhea" id="RHEA-COMP:9863"/>
        <dbReference type="Rhea" id="RHEA-COMP:11604"/>
        <dbReference type="ChEBI" id="CHEBI:15378"/>
        <dbReference type="ChEBI" id="CHEBI:29999"/>
        <dbReference type="ChEBI" id="CHEBI:30616"/>
        <dbReference type="ChEBI" id="CHEBI:83421"/>
        <dbReference type="ChEBI" id="CHEBI:456216"/>
        <dbReference type="EC" id="2.7.11.22"/>
    </reaction>
</comment>
<comment type="catalytic activity">
    <reaction>
        <text>L-threonyl-[protein] + ATP = O-phospho-L-threonyl-[protein] + ADP + H(+)</text>
        <dbReference type="Rhea" id="RHEA:46608"/>
        <dbReference type="Rhea" id="RHEA-COMP:11060"/>
        <dbReference type="Rhea" id="RHEA-COMP:11605"/>
        <dbReference type="ChEBI" id="CHEBI:15378"/>
        <dbReference type="ChEBI" id="CHEBI:30013"/>
        <dbReference type="ChEBI" id="CHEBI:30616"/>
        <dbReference type="ChEBI" id="CHEBI:61977"/>
        <dbReference type="ChEBI" id="CHEBI:456216"/>
        <dbReference type="EC" id="2.7.11.22"/>
    </reaction>
</comment>
<comment type="similarity">
    <text evidence="7">Belongs to the protein kinase superfamily. CMGC Ser/Thr protein kinase family. CDC2/CDKX subfamily.</text>
</comment>
<dbReference type="EC" id="2.7.11.22"/>
<dbReference type="EMBL" id="CR858117">
    <property type="protein sequence ID" value="CAH90356.1"/>
    <property type="molecule type" value="mRNA"/>
</dbReference>
<dbReference type="RefSeq" id="NP_001127275.1">
    <property type="nucleotide sequence ID" value="NM_001133803.1"/>
</dbReference>
<dbReference type="RefSeq" id="XP_009236983.1">
    <property type="nucleotide sequence ID" value="XM_009238708.3"/>
</dbReference>
<dbReference type="RefSeq" id="XP_009236987.1">
    <property type="nucleotide sequence ID" value="XM_009238712.4"/>
</dbReference>
<dbReference type="SMR" id="Q5RD01"/>
<dbReference type="FunCoup" id="Q5RD01">
    <property type="interactions" value="634"/>
</dbReference>
<dbReference type="STRING" id="9601.ENSPPYP00000000327"/>
<dbReference type="GeneID" id="100174332"/>
<dbReference type="KEGG" id="pon:100174332"/>
<dbReference type="CTD" id="5129"/>
<dbReference type="eggNOG" id="KOG0594">
    <property type="taxonomic scope" value="Eukaryota"/>
</dbReference>
<dbReference type="HOGENOM" id="CLU_000288_154_3_1"/>
<dbReference type="InParanoid" id="Q5RD01"/>
<dbReference type="OrthoDB" id="1732493at2759"/>
<dbReference type="TreeFam" id="TF106508"/>
<dbReference type="Proteomes" id="UP000001595">
    <property type="component" value="Chromosome 1"/>
</dbReference>
<dbReference type="GO" id="GO:0005737">
    <property type="term" value="C:cytoplasm"/>
    <property type="evidence" value="ECO:0007669"/>
    <property type="project" value="TreeGrafter"/>
</dbReference>
<dbReference type="GO" id="GO:0005634">
    <property type="term" value="C:nucleus"/>
    <property type="evidence" value="ECO:0007669"/>
    <property type="project" value="TreeGrafter"/>
</dbReference>
<dbReference type="GO" id="GO:0005524">
    <property type="term" value="F:ATP binding"/>
    <property type="evidence" value="ECO:0007669"/>
    <property type="project" value="UniProtKB-KW"/>
</dbReference>
<dbReference type="GO" id="GO:0004693">
    <property type="term" value="F:cyclin-dependent protein serine/threonine kinase activity"/>
    <property type="evidence" value="ECO:0007669"/>
    <property type="project" value="UniProtKB-EC"/>
</dbReference>
<dbReference type="GO" id="GO:0106310">
    <property type="term" value="F:protein serine kinase activity"/>
    <property type="evidence" value="ECO:0007669"/>
    <property type="project" value="RHEA"/>
</dbReference>
<dbReference type="FunFam" id="3.30.200.20:FF:000007">
    <property type="entry name" value="Cyclin-dependent kinase 14, putative"/>
    <property type="match status" value="1"/>
</dbReference>
<dbReference type="FunFam" id="1.10.510.10:FF:000061">
    <property type="entry name" value="Putative cyclin-dependent kinase 17"/>
    <property type="match status" value="1"/>
</dbReference>
<dbReference type="Gene3D" id="3.30.200.20">
    <property type="entry name" value="Phosphorylase Kinase, domain 1"/>
    <property type="match status" value="1"/>
</dbReference>
<dbReference type="Gene3D" id="1.10.510.10">
    <property type="entry name" value="Transferase(Phosphotransferase) domain 1"/>
    <property type="match status" value="1"/>
</dbReference>
<dbReference type="InterPro" id="IPR050108">
    <property type="entry name" value="CDK"/>
</dbReference>
<dbReference type="InterPro" id="IPR011009">
    <property type="entry name" value="Kinase-like_dom_sf"/>
</dbReference>
<dbReference type="InterPro" id="IPR000719">
    <property type="entry name" value="Prot_kinase_dom"/>
</dbReference>
<dbReference type="InterPro" id="IPR017441">
    <property type="entry name" value="Protein_kinase_ATP_BS"/>
</dbReference>
<dbReference type="InterPro" id="IPR008271">
    <property type="entry name" value="Ser/Thr_kinase_AS"/>
</dbReference>
<dbReference type="PANTHER" id="PTHR24056">
    <property type="entry name" value="CELL DIVISION PROTEIN KINASE"/>
    <property type="match status" value="1"/>
</dbReference>
<dbReference type="PANTHER" id="PTHR24056:SF52">
    <property type="entry name" value="CYCLIN-DEPENDENT KINASE 18"/>
    <property type="match status" value="1"/>
</dbReference>
<dbReference type="Pfam" id="PF00069">
    <property type="entry name" value="Pkinase"/>
    <property type="match status" value="1"/>
</dbReference>
<dbReference type="SMART" id="SM00220">
    <property type="entry name" value="S_TKc"/>
    <property type="match status" value="1"/>
</dbReference>
<dbReference type="SUPFAM" id="SSF56112">
    <property type="entry name" value="Protein kinase-like (PK-like)"/>
    <property type="match status" value="1"/>
</dbReference>
<dbReference type="PROSITE" id="PS00107">
    <property type="entry name" value="PROTEIN_KINASE_ATP"/>
    <property type="match status" value="1"/>
</dbReference>
<dbReference type="PROSITE" id="PS50011">
    <property type="entry name" value="PROTEIN_KINASE_DOM"/>
    <property type="match status" value="1"/>
</dbReference>
<dbReference type="PROSITE" id="PS00108">
    <property type="entry name" value="PROTEIN_KINASE_ST"/>
    <property type="match status" value="1"/>
</dbReference>
<protein>
    <recommendedName>
        <fullName>Cyclin-dependent kinase 18</fullName>
        <ecNumber>2.7.11.22</ecNumber>
    </recommendedName>
    <alternativeName>
        <fullName>Cell division protein kinase 18</fullName>
    </alternativeName>
    <alternativeName>
        <fullName>PCTAIRE-motif protein kinase 3</fullName>
    </alternativeName>
    <alternativeName>
        <fullName>Serine/threonine-protein kinase PCTAIRE-3</fullName>
    </alternativeName>
</protein>
<gene>
    <name type="primary">CDK18</name>
    <name type="synonym">PCTAIRE3</name>
    <name type="synonym">PCTK3</name>
</gene>
<sequence length="474" mass="54469">MIMNKMKNFKRRFSLSVPRTETIEESLAEFTEQFNQLHNRRNEDLQLGPLGRDPLQECSTFSPTDSGEEPGQLSPGVQFQRRQNQRRFSMEDVSKRLSLPMDIRLPQEFLQKLQMESPDLPKPLSRMSRRASLSDIGFGKLETYVKLDKLGEGTYATVFKGRSKLTENLVALKEIRLEHEEGAPCTAIREVSLLKNLKHANIVTLHDLIHTDRSLTLVFEYLDSDLKQYLDHCGNLMSMHNVKIFMFQLLRGLAYCHHRKILHRDLKPQNLLINERGELKLADFGLARAKSVPTKTYSNEVVTLWYRPPDVLLGSTEYSTPIDMWGVGCIHYEMATGRPLFPGSTVKEELHLIFRLLGTPTEETWPGVTAFSEFRTYSFPRYLPQPLISHAPRLDTDGIQLLSSLLLYESKSRMSAEAALSHPYFRSLGERVHQLEDTASIFSLKEIQLQKDPGYRGLAFQQPGRGKNRRQSIF</sequence>
<evidence type="ECO:0000250" key="1"/>
<evidence type="ECO:0000250" key="2">
    <source>
        <dbReference type="UniProtKB" id="O35832"/>
    </source>
</evidence>
<evidence type="ECO:0000250" key="3">
    <source>
        <dbReference type="UniProtKB" id="Q07002"/>
    </source>
</evidence>
<evidence type="ECO:0000255" key="4">
    <source>
        <dbReference type="PROSITE-ProRule" id="PRU00159"/>
    </source>
</evidence>
<evidence type="ECO:0000255" key="5">
    <source>
        <dbReference type="PROSITE-ProRule" id="PRU10027"/>
    </source>
</evidence>
<evidence type="ECO:0000256" key="6">
    <source>
        <dbReference type="SAM" id="MobiDB-lite"/>
    </source>
</evidence>
<evidence type="ECO:0000305" key="7"/>